<organism>
    <name type="scientific">Symbiobacterium thermophilum (strain DSM 24528 / JCM 14929 / IAM 14863 / T)</name>
    <dbReference type="NCBI Taxonomy" id="292459"/>
    <lineage>
        <taxon>Bacteria</taxon>
        <taxon>Bacillati</taxon>
        <taxon>Bacillota</taxon>
        <taxon>Clostridia</taxon>
        <taxon>Eubacteriales</taxon>
        <taxon>Symbiobacteriaceae</taxon>
        <taxon>Symbiobacterium</taxon>
    </lineage>
</organism>
<feature type="chain" id="PRO_0000327170" description="Protoheme IX farnesyltransferase">
    <location>
        <begin position="1"/>
        <end position="298"/>
    </location>
</feature>
<feature type="transmembrane region" description="Helical" evidence="1">
    <location>
        <begin position="26"/>
        <end position="46"/>
    </location>
</feature>
<feature type="transmembrane region" description="Helical" evidence="1">
    <location>
        <begin position="48"/>
        <end position="68"/>
    </location>
</feature>
<feature type="transmembrane region" description="Helical" evidence="1">
    <location>
        <begin position="110"/>
        <end position="130"/>
    </location>
</feature>
<feature type="transmembrane region" description="Helical" evidence="1">
    <location>
        <begin position="147"/>
        <end position="167"/>
    </location>
</feature>
<feature type="transmembrane region" description="Helical" evidence="1">
    <location>
        <begin position="174"/>
        <end position="194"/>
    </location>
</feature>
<feature type="transmembrane region" description="Helical" evidence="1">
    <location>
        <begin position="220"/>
        <end position="240"/>
    </location>
</feature>
<feature type="transmembrane region" description="Helical" evidence="1">
    <location>
        <begin position="243"/>
        <end position="263"/>
    </location>
</feature>
<feature type="transmembrane region" description="Helical" evidence="1">
    <location>
        <begin position="276"/>
        <end position="296"/>
    </location>
</feature>
<proteinExistence type="inferred from homology"/>
<reference key="1">
    <citation type="journal article" date="2004" name="Nucleic Acids Res.">
        <title>Genome sequence of Symbiobacterium thermophilum, an uncultivable bacterium that depends on microbial commensalism.</title>
        <authorList>
            <person name="Ueda K."/>
            <person name="Yamashita A."/>
            <person name="Ishikawa J."/>
            <person name="Shimada M."/>
            <person name="Watsuji T."/>
            <person name="Morimura K."/>
            <person name="Ikeda H."/>
            <person name="Hattori M."/>
            <person name="Beppu T."/>
        </authorList>
    </citation>
    <scope>NUCLEOTIDE SEQUENCE [LARGE SCALE GENOMIC DNA]</scope>
    <source>
        <strain>DSM 24528 / JCM 14929 / IAM 14863 / T</strain>
    </source>
</reference>
<accession>Q67ML5</accession>
<comment type="function">
    <text evidence="1">Converts heme B (protoheme IX) to heme O by substitution of the vinyl group on carbon 2 of heme B porphyrin ring with a hydroxyethyl farnesyl side group.</text>
</comment>
<comment type="catalytic activity">
    <reaction evidence="1">
        <text>heme b + (2E,6E)-farnesyl diphosphate + H2O = Fe(II)-heme o + diphosphate</text>
        <dbReference type="Rhea" id="RHEA:28070"/>
        <dbReference type="ChEBI" id="CHEBI:15377"/>
        <dbReference type="ChEBI" id="CHEBI:33019"/>
        <dbReference type="ChEBI" id="CHEBI:60344"/>
        <dbReference type="ChEBI" id="CHEBI:60530"/>
        <dbReference type="ChEBI" id="CHEBI:175763"/>
        <dbReference type="EC" id="2.5.1.141"/>
    </reaction>
</comment>
<comment type="pathway">
    <text evidence="1">Porphyrin-containing compound metabolism; heme O biosynthesis; heme O from protoheme: step 1/1.</text>
</comment>
<comment type="subunit">
    <text evidence="1">Interacts with CtaA.</text>
</comment>
<comment type="subcellular location">
    <subcellularLocation>
        <location evidence="1">Cell membrane</location>
        <topology evidence="1">Multi-pass membrane protein</topology>
    </subcellularLocation>
</comment>
<comment type="miscellaneous">
    <text evidence="1">Carbon 2 of the heme B porphyrin ring is defined according to the Fischer nomenclature.</text>
</comment>
<comment type="similarity">
    <text evidence="1">Belongs to the UbiA prenyltransferase family. Protoheme IX farnesyltransferase subfamily.</text>
</comment>
<protein>
    <recommendedName>
        <fullName evidence="1">Protoheme IX farnesyltransferase</fullName>
        <ecNumber evidence="1">2.5.1.141</ecNumber>
    </recommendedName>
    <alternativeName>
        <fullName evidence="1">Heme B farnesyltransferase</fullName>
    </alternativeName>
    <alternativeName>
        <fullName evidence="1">Heme O synthase</fullName>
    </alternativeName>
</protein>
<dbReference type="EC" id="2.5.1.141" evidence="1"/>
<dbReference type="EMBL" id="AP006840">
    <property type="protein sequence ID" value="BAD41078.1"/>
    <property type="molecule type" value="Genomic_DNA"/>
</dbReference>
<dbReference type="RefSeq" id="WP_011196218.1">
    <property type="nucleotide sequence ID" value="NC_006177.1"/>
</dbReference>
<dbReference type="SMR" id="Q67ML5"/>
<dbReference type="STRING" id="292459.STH2093"/>
<dbReference type="KEGG" id="sth:STH2093"/>
<dbReference type="eggNOG" id="COG0109">
    <property type="taxonomic scope" value="Bacteria"/>
</dbReference>
<dbReference type="HOGENOM" id="CLU_029631_0_2_9"/>
<dbReference type="OrthoDB" id="9814417at2"/>
<dbReference type="UniPathway" id="UPA00834">
    <property type="reaction ID" value="UER00712"/>
</dbReference>
<dbReference type="Proteomes" id="UP000000417">
    <property type="component" value="Chromosome"/>
</dbReference>
<dbReference type="GO" id="GO:0005886">
    <property type="term" value="C:plasma membrane"/>
    <property type="evidence" value="ECO:0007669"/>
    <property type="project" value="UniProtKB-SubCell"/>
</dbReference>
<dbReference type="GO" id="GO:0008495">
    <property type="term" value="F:protoheme IX farnesyltransferase activity"/>
    <property type="evidence" value="ECO:0007669"/>
    <property type="project" value="UniProtKB-UniRule"/>
</dbReference>
<dbReference type="GO" id="GO:0048034">
    <property type="term" value="P:heme O biosynthetic process"/>
    <property type="evidence" value="ECO:0007669"/>
    <property type="project" value="UniProtKB-UniRule"/>
</dbReference>
<dbReference type="CDD" id="cd13957">
    <property type="entry name" value="PT_UbiA_Cox10"/>
    <property type="match status" value="1"/>
</dbReference>
<dbReference type="FunFam" id="1.10.357.140:FF:000001">
    <property type="entry name" value="Protoheme IX farnesyltransferase"/>
    <property type="match status" value="1"/>
</dbReference>
<dbReference type="Gene3D" id="1.10.357.140">
    <property type="entry name" value="UbiA prenyltransferase"/>
    <property type="match status" value="1"/>
</dbReference>
<dbReference type="HAMAP" id="MF_00154">
    <property type="entry name" value="CyoE_CtaB"/>
    <property type="match status" value="1"/>
</dbReference>
<dbReference type="InterPro" id="IPR006369">
    <property type="entry name" value="Protohaem_IX_farnesylTrfase"/>
</dbReference>
<dbReference type="InterPro" id="IPR000537">
    <property type="entry name" value="UbiA_prenyltransferase"/>
</dbReference>
<dbReference type="InterPro" id="IPR030470">
    <property type="entry name" value="UbiA_prenylTrfase_CS"/>
</dbReference>
<dbReference type="InterPro" id="IPR044878">
    <property type="entry name" value="UbiA_sf"/>
</dbReference>
<dbReference type="NCBIfam" id="TIGR01473">
    <property type="entry name" value="cyoE_ctaB"/>
    <property type="match status" value="1"/>
</dbReference>
<dbReference type="NCBIfam" id="NF003349">
    <property type="entry name" value="PRK04375.1-2"/>
    <property type="match status" value="1"/>
</dbReference>
<dbReference type="PANTHER" id="PTHR43448:SF7">
    <property type="entry name" value="4-HYDROXYBENZOATE SOLANESYLTRANSFERASE"/>
    <property type="match status" value="1"/>
</dbReference>
<dbReference type="PANTHER" id="PTHR43448">
    <property type="entry name" value="PROTOHEME IX FARNESYLTRANSFERASE, MITOCHONDRIAL"/>
    <property type="match status" value="1"/>
</dbReference>
<dbReference type="Pfam" id="PF01040">
    <property type="entry name" value="UbiA"/>
    <property type="match status" value="1"/>
</dbReference>
<dbReference type="PROSITE" id="PS00943">
    <property type="entry name" value="UBIA"/>
    <property type="match status" value="1"/>
</dbReference>
<sequence>MFAQARDRLQSGQVVRDYVALTKPRIVILLLITGFAAMWVAAGGPPPLGLTVVTMIGLALSCGAANAINMWYDRDIDAVMARTRRRPLPAGRLTPEQALRFGVITGALSFLVLLTVNLLTALLATAGLLFYVLVYTMWLKRSTVHNIVIGGAAGAAPPLVGWAAVTGRLDWAAVIMFLVVFLWTPPHFWALALFRSEDYERAGVPMLPVVRGERATKWQILLYSLLLIPSAALLYWTGTVGRLYLWTSVVLGCAMVSASVGLLRERAPQMDWAHRTYGWSLLYLFVIFLAMMLDVTRA</sequence>
<name>COXX_SYMTH</name>
<evidence type="ECO:0000255" key="1">
    <source>
        <dbReference type="HAMAP-Rule" id="MF_00154"/>
    </source>
</evidence>
<keyword id="KW-1003">Cell membrane</keyword>
<keyword id="KW-0350">Heme biosynthesis</keyword>
<keyword id="KW-0472">Membrane</keyword>
<keyword id="KW-1185">Reference proteome</keyword>
<keyword id="KW-0808">Transferase</keyword>
<keyword id="KW-0812">Transmembrane</keyword>
<keyword id="KW-1133">Transmembrane helix</keyword>
<gene>
    <name evidence="1" type="primary">ctaB</name>
    <name type="ordered locus">STH2093</name>
</gene>